<organism>
    <name type="scientific">Xenopus laevis</name>
    <name type="common">African clawed frog</name>
    <dbReference type="NCBI Taxonomy" id="8355"/>
    <lineage>
        <taxon>Eukaryota</taxon>
        <taxon>Metazoa</taxon>
        <taxon>Chordata</taxon>
        <taxon>Craniata</taxon>
        <taxon>Vertebrata</taxon>
        <taxon>Euteleostomi</taxon>
        <taxon>Amphibia</taxon>
        <taxon>Batrachia</taxon>
        <taxon>Anura</taxon>
        <taxon>Pipoidea</taxon>
        <taxon>Pipidae</taxon>
        <taxon>Xenopodinae</taxon>
        <taxon>Xenopus</taxon>
        <taxon>Xenopus</taxon>
    </lineage>
</organism>
<accession>Q32NN2</accession>
<name>QKIA_XENLA</name>
<sequence>MVGEMETKEKPKPTPDYLMQLMNDKKLMSSLPNFCGIFTHLERLLDEEISRVRKDMYNDTMNSSSNEKRTSELPDGIGPIVQLQEKLYVPVKEYPDFNFVGRILGPRGLTAKQLEAETGCKIMVRGKGSMRDKKKEEQNRGKPNWEHLNEDLHVLITVEDAQNRAELKLKRAVEEVKKLLVPAAEGEDSLKKMQLMELAILNGTYRDANLKSPALAFSLAATGQAPRIITGPAPVLSPAALRTPTPAGHTLMPLIRQIQTAVMPNGTPHPTATLMQQAPEGGLIYTPYEYPYTLAPATSILEYPIEASGVLGAVATKVRRHDMRVHPYQRIVTADRAATGN</sequence>
<comment type="function">
    <text evidence="1 2 3 5">RNA reader protein, which recognizes and binds specific RNAs, thereby regulating RNA metabolic processes, such as pre-mRNA splicing, circular RNA (circRNA) formation, mRNA export, mRNA stability and/or translation (By similarity). Involved in various cellular processes, such as mRNA storage into stress granules, apoptosis, interferon response, glial cell fate and development. Binds to the 5'-NACUAAY-N(1,20)-UAAY-3' RNA core sequence (By similarity). Acts as a mRNA modification reader that specifically recognizes and binds mRNA transcripts modified by internal N(7)-methylguanine (m7G) (By similarity). Promotes the formation of circular RNAs (circRNAs): acts by binding to sites flanking circRNA-forming exons. CircRNAs are produced by back-splicing circularization of pre-mRNAs. Required to protect and promote stability of mRNAs which promotes oligodendrocyte differentiation (By similarity). Acts as an important regulator of muscle development (By similarity). Essential for notochord development (PubMed:9303534).</text>
</comment>
<comment type="subunit">
    <text evidence="5">Homodimer; does not require RNA to homodimerize.</text>
</comment>
<comment type="subcellular location">
    <subcellularLocation>
        <location evidence="5">Nucleus</location>
    </subcellularLocation>
    <subcellularLocation>
        <location evidence="5">Cytoplasm</location>
    </subcellularLocation>
</comment>
<comment type="alternative products">
    <event type="alternative splicing"/>
    <isoform>
        <id>Q32NN2-1</id>
        <name>1</name>
        <sequence type="displayed"/>
    </isoform>
    <isoform>
        <id>Q32NN2-2</id>
        <name>2</name>
        <name>Xqua365</name>
        <sequence type="described" ref="VSP_019206"/>
    </isoform>
    <isoform>
        <id>Q32NN2-3</id>
        <name>3</name>
        <name>Xqua357</name>
        <sequence type="described" ref="VSP_019206 VSP_019207"/>
    </isoform>
    <isoform>
        <id>Q32NN2-4</id>
        <name>4</name>
        <sequence type="described" ref="VSP_019207"/>
    </isoform>
</comment>
<comment type="developmental stage">
    <text evidence="4 5">First detected in the chordamesoderm of the dorsal blastopore lip of the mid-gastrula embryo (stage 11). This tissue, which differentiates into the notochord. In late gastrula embryos (stage 13), it is highly expressed in the notochord, and the original expression domain expands to include the tissue surrounding the blastopore. In neurula embryos, it is maintained in the notochord and the circumblastoporal region and now also extends to the paraxial mesoderm and the neuroectoderm. By the tailbud stage, it is expressed in various mesodermal and neural tissues. Highly expressed in the brain and the neural tube. Maintained throughout development to the tadpole stage (stage 35).</text>
</comment>
<comment type="similarity">
    <text evidence="8">Belongs to the quaking family.</text>
</comment>
<reference key="1">
    <citation type="journal article" date="1997" name="Gene">
        <title>Remarkable sequence conservation of transcripts encoding amphibian and mammalian homologues of quaking, a KH domain RNA-binding protein.</title>
        <authorList>
            <person name="Zorn A.M."/>
            <person name="Grow M."/>
            <person name="Patterson K.D."/>
            <person name="Ebersole T.A."/>
            <person name="Chen Q."/>
            <person name="Artzt K."/>
            <person name="Krieg P.A."/>
        </authorList>
    </citation>
    <scope>NUCLEOTIDE SEQUENCE [MRNA] (ISOFORM 2)</scope>
    <scope>RNA-BINDING</scope>
    <scope>DEVELOPMENTAL STAGE</scope>
</reference>
<reference key="2">
    <citation type="submission" date="2005-11" db="EMBL/GenBank/DDBJ databases">
        <authorList>
            <consortium name="NIH - Xenopus Gene Collection (XGC) project"/>
        </authorList>
    </citation>
    <scope>NUCLEOTIDE SEQUENCE [LARGE SCALE MRNA] (ISOFORM 4)</scope>
    <source>
        <tissue>Embryo</tissue>
    </source>
</reference>
<reference key="3">
    <citation type="journal article" date="1997" name="Genes Dev.">
        <title>The KH domain protein encoded by quaking functions as a dimer and is essential for notochord development in Xenopus embryos.</title>
        <authorList>
            <person name="Zorn A.M."/>
            <person name="Krieg P.A."/>
        </authorList>
    </citation>
    <scope>ALTERNATIVE SPLICING (ISOFORMS 2 AND 3)</scope>
    <scope>FUNCTION</scope>
    <scope>SUBCELLULAR LOCATION</scope>
    <scope>RNA-BINDING</scope>
    <scope>SUBUNIT</scope>
    <scope>DEVELOPMENTAL STAGE</scope>
</reference>
<reference key="4">
    <citation type="journal article" date="2005" name="J. Mol. Biol.">
        <title>Solution structure and backbone dynamics of the KH-QUA2 region of the Xenopus STAR/GSG quaking protein.</title>
        <authorList>
            <person name="Maguire M.L."/>
            <person name="Guler-Gane G."/>
            <person name="Nietlispach D."/>
            <person name="Raine A.R.C."/>
            <person name="Zorn A.M."/>
            <person name="Standart N."/>
            <person name="Broadhurst R.W."/>
        </authorList>
    </citation>
    <scope>STRUCTURE BY NMR OF 82-215</scope>
</reference>
<feature type="chain" id="PRO_0000239380" description="KH domain-containing RNA-binding protein qki.S">
    <location>
        <begin position="1"/>
        <end position="341"/>
    </location>
</feature>
<feature type="domain" description="KH">
    <location>
        <begin position="88"/>
        <end position="154"/>
    </location>
</feature>
<feature type="short sequence motif" description="Nuclear localization signal" evidence="3">
    <location>
        <begin position="324"/>
        <end position="330"/>
    </location>
</feature>
<feature type="splice variant" id="VSP_019206" description="In isoform 2 and isoform 3." evidence="6">
    <original>M</original>
    <variation>MFFGHAGCDIRNSAAPAFGLFDWNM</variation>
    <location>
        <position position="1"/>
    </location>
</feature>
<feature type="splice variant" id="VSP_019207" description="In isoform 3 and isoform 4." evidence="7">
    <location>
        <begin position="214"/>
        <end position="221"/>
    </location>
</feature>
<feature type="sequence conflict" description="In Ref. 1 and 4." evidence="8" ref="1 4">
    <original>Q</original>
    <variation>K</variation>
    <location>
        <position position="194"/>
    </location>
</feature>
<feature type="helix" evidence="10">
    <location>
        <begin position="15"/>
        <end position="29"/>
    </location>
</feature>
<feature type="helix" evidence="10">
    <location>
        <begin position="34"/>
        <end position="37"/>
    </location>
</feature>
<feature type="helix" evidence="10">
    <location>
        <begin position="41"/>
        <end position="54"/>
    </location>
</feature>
<feature type="strand" evidence="9">
    <location>
        <begin position="83"/>
        <end position="88"/>
    </location>
</feature>
<feature type="turn" evidence="9">
    <location>
        <begin position="91"/>
        <end position="93"/>
    </location>
</feature>
<feature type="strand" evidence="9">
    <location>
        <begin position="95"/>
        <end position="97"/>
    </location>
</feature>
<feature type="helix" evidence="9">
    <location>
        <begin position="99"/>
        <end position="103"/>
    </location>
</feature>
<feature type="turn" evidence="9">
    <location>
        <begin position="104"/>
        <end position="107"/>
    </location>
</feature>
<feature type="helix" evidence="9">
    <location>
        <begin position="108"/>
        <end position="118"/>
    </location>
</feature>
<feature type="strand" evidence="9">
    <location>
        <begin position="119"/>
        <end position="126"/>
    </location>
</feature>
<feature type="helix" evidence="9">
    <location>
        <begin position="133"/>
        <end position="137"/>
    </location>
</feature>
<feature type="helix" evidence="9">
    <location>
        <begin position="143"/>
        <end position="146"/>
    </location>
</feature>
<feature type="turn" evidence="9">
    <location>
        <begin position="147"/>
        <end position="149"/>
    </location>
</feature>
<feature type="strand" evidence="9">
    <location>
        <begin position="153"/>
        <end position="158"/>
    </location>
</feature>
<feature type="helix" evidence="9">
    <location>
        <begin position="163"/>
        <end position="179"/>
    </location>
</feature>
<feature type="strand" evidence="9">
    <location>
        <begin position="184"/>
        <end position="188"/>
    </location>
</feature>
<feature type="helix" evidence="9">
    <location>
        <begin position="189"/>
        <end position="195"/>
    </location>
</feature>
<feature type="helix" evidence="9">
    <location>
        <begin position="197"/>
        <end position="199"/>
    </location>
</feature>
<feature type="strand" evidence="9">
    <location>
        <begin position="200"/>
        <end position="202"/>
    </location>
</feature>
<feature type="turn" evidence="9">
    <location>
        <begin position="203"/>
        <end position="205"/>
    </location>
</feature>
<feature type="helix" evidence="9">
    <location>
        <begin position="207"/>
        <end position="210"/>
    </location>
</feature>
<protein>
    <recommendedName>
        <fullName evidence="3">KH domain-containing RNA-binding protein qki.S</fullName>
    </recommendedName>
    <alternativeName>
        <fullName evidence="8">Protein quaking-A</fullName>
        <shortName>Xqua</shortName>
    </alternativeName>
</protein>
<dbReference type="EMBL" id="BC108554">
    <property type="protein sequence ID" value="AAI08555.1"/>
    <property type="molecule type" value="mRNA"/>
</dbReference>
<dbReference type="RefSeq" id="NP_001089857.1">
    <molecule id="Q32NN2-4"/>
    <property type="nucleotide sequence ID" value="NM_001096388.1"/>
</dbReference>
<dbReference type="RefSeq" id="XP_018120074.1">
    <molecule id="Q32NN2-2"/>
    <property type="nucleotide sequence ID" value="XM_018264585.2"/>
</dbReference>
<dbReference type="RefSeq" id="XP_018120075.1">
    <molecule id="Q32NN2-2"/>
    <property type="nucleotide sequence ID" value="XM_018264586.2"/>
</dbReference>
<dbReference type="PDB" id="2BL5">
    <property type="method" value="NMR"/>
    <property type="chains" value="A=82-215"/>
</dbReference>
<dbReference type="PDB" id="2YMJ">
    <property type="method" value="NMR"/>
    <property type="chains" value="A/B=8-57"/>
</dbReference>
<dbReference type="PDBsum" id="2BL5"/>
<dbReference type="PDBsum" id="2YMJ"/>
<dbReference type="BMRB" id="Q32NN2"/>
<dbReference type="SMR" id="Q32NN2"/>
<dbReference type="DNASU" id="734923"/>
<dbReference type="GeneID" id="734923"/>
<dbReference type="KEGG" id="xla:734923"/>
<dbReference type="AGR" id="Xenbase:XB-GENE-6254729"/>
<dbReference type="CTD" id="734923"/>
<dbReference type="Xenbase" id="XB-GENE-6254729">
    <property type="gene designation" value="qki.S"/>
</dbReference>
<dbReference type="OMA" id="GHTIMPL"/>
<dbReference type="OrthoDB" id="6777263at2759"/>
<dbReference type="EvolutionaryTrace" id="Q32NN2"/>
<dbReference type="Proteomes" id="UP000186698">
    <property type="component" value="Chromosome 5S"/>
</dbReference>
<dbReference type="Bgee" id="734923">
    <property type="expression patterns" value="Expressed in blastula and 19 other cell types or tissues"/>
</dbReference>
<dbReference type="GO" id="GO:0005829">
    <property type="term" value="C:cytosol"/>
    <property type="evidence" value="ECO:0000315"/>
    <property type="project" value="CAFA"/>
</dbReference>
<dbReference type="GO" id="GO:0005634">
    <property type="term" value="C:nucleus"/>
    <property type="evidence" value="ECO:0000315"/>
    <property type="project" value="CAFA"/>
</dbReference>
<dbReference type="GO" id="GO:0042802">
    <property type="term" value="F:identical protein binding"/>
    <property type="evidence" value="ECO:0000314"/>
    <property type="project" value="CAFA"/>
</dbReference>
<dbReference type="GO" id="GO:0003729">
    <property type="term" value="F:mRNA binding"/>
    <property type="evidence" value="ECO:0000318"/>
    <property type="project" value="GO_Central"/>
</dbReference>
<dbReference type="GO" id="GO:0008266">
    <property type="term" value="F:poly(U) RNA binding"/>
    <property type="evidence" value="ECO:0000315"/>
    <property type="project" value="CAFA"/>
</dbReference>
<dbReference type="GO" id="GO:0003727">
    <property type="term" value="F:single-stranded RNA binding"/>
    <property type="evidence" value="ECO:0000315"/>
    <property type="project" value="CAFA"/>
</dbReference>
<dbReference type="GO" id="GO:0051028">
    <property type="term" value="P:mRNA transport"/>
    <property type="evidence" value="ECO:0007669"/>
    <property type="project" value="UniProtKB-KW"/>
</dbReference>
<dbReference type="GO" id="GO:0045650">
    <property type="term" value="P:negative regulation of macrophage differentiation"/>
    <property type="evidence" value="ECO:0000250"/>
    <property type="project" value="UniProtKB"/>
</dbReference>
<dbReference type="GO" id="GO:0060034">
    <property type="term" value="P:notochord cell differentiation"/>
    <property type="evidence" value="ECO:0000315"/>
    <property type="project" value="CAFA"/>
</dbReference>
<dbReference type="GO" id="GO:0030903">
    <property type="term" value="P:notochord development"/>
    <property type="evidence" value="ECO:0000315"/>
    <property type="project" value="CAFA"/>
</dbReference>
<dbReference type="GO" id="GO:0014028">
    <property type="term" value="P:notochord formation"/>
    <property type="evidence" value="ECO:0000315"/>
    <property type="project" value="CAFA"/>
</dbReference>
<dbReference type="GO" id="GO:0048710">
    <property type="term" value="P:regulation of astrocyte differentiation"/>
    <property type="evidence" value="ECO:0000250"/>
    <property type="project" value="UniProtKB"/>
</dbReference>
<dbReference type="GO" id="GO:0048024">
    <property type="term" value="P:regulation of mRNA splicing, via spliceosome"/>
    <property type="evidence" value="ECO:0000318"/>
    <property type="project" value="GO_Central"/>
</dbReference>
<dbReference type="GO" id="GO:0006417">
    <property type="term" value="P:regulation of translation"/>
    <property type="evidence" value="ECO:0007669"/>
    <property type="project" value="UniProtKB-KW"/>
</dbReference>
<dbReference type="GO" id="GO:0160091">
    <property type="term" value="P:spliceosome-depend formation of circular RNA"/>
    <property type="evidence" value="ECO:0000250"/>
    <property type="project" value="UniProtKB"/>
</dbReference>
<dbReference type="CDD" id="cd22465">
    <property type="entry name" value="KH-I_Hqk"/>
    <property type="match status" value="1"/>
</dbReference>
<dbReference type="DisProt" id="DP00286"/>
<dbReference type="FunFam" id="1.20.5.4010:FF:000001">
    <property type="entry name" value="protein quaking isoform X1"/>
    <property type="match status" value="1"/>
</dbReference>
<dbReference type="FunFam" id="3.30.1370.10:FF:000055">
    <property type="entry name" value="protein quaking isoform X1"/>
    <property type="match status" value="1"/>
</dbReference>
<dbReference type="Gene3D" id="1.20.5.4010">
    <property type="match status" value="1"/>
</dbReference>
<dbReference type="Gene3D" id="3.30.1370.10">
    <property type="entry name" value="K Homology domain, type 1"/>
    <property type="match status" value="1"/>
</dbReference>
<dbReference type="InterPro" id="IPR045071">
    <property type="entry name" value="BBP-like"/>
</dbReference>
<dbReference type="InterPro" id="IPR055256">
    <property type="entry name" value="KH_1_KHDC4/BBP-like"/>
</dbReference>
<dbReference type="InterPro" id="IPR004087">
    <property type="entry name" value="KH_dom"/>
</dbReference>
<dbReference type="InterPro" id="IPR036612">
    <property type="entry name" value="KH_dom_type_1_sf"/>
</dbReference>
<dbReference type="InterPro" id="IPR032367">
    <property type="entry name" value="Quaking_NLS"/>
</dbReference>
<dbReference type="InterPro" id="IPR032377">
    <property type="entry name" value="STAR_dimer"/>
</dbReference>
<dbReference type="PANTHER" id="PTHR11208:SF125">
    <property type="entry name" value="KH DOMAIN-CONTAINING RNA-BINDING PROTEIN QKI"/>
    <property type="match status" value="1"/>
</dbReference>
<dbReference type="PANTHER" id="PTHR11208">
    <property type="entry name" value="RNA-BINDING PROTEIN RELATED"/>
    <property type="match status" value="1"/>
</dbReference>
<dbReference type="Pfam" id="PF22675">
    <property type="entry name" value="KH-I_KHDC4-BBP"/>
    <property type="match status" value="1"/>
</dbReference>
<dbReference type="Pfam" id="PF16551">
    <property type="entry name" value="Quaking_NLS"/>
    <property type="match status" value="1"/>
</dbReference>
<dbReference type="Pfam" id="PF16544">
    <property type="entry name" value="STAR_dimer"/>
    <property type="match status" value="1"/>
</dbReference>
<dbReference type="SMART" id="SM00322">
    <property type="entry name" value="KH"/>
    <property type="match status" value="1"/>
</dbReference>
<dbReference type="SUPFAM" id="SSF54791">
    <property type="entry name" value="Eukaryotic type KH-domain (KH-domain type I)"/>
    <property type="match status" value="1"/>
</dbReference>
<evidence type="ECO:0000250" key="1">
    <source>
        <dbReference type="UniProtKB" id="Q6P0D0"/>
    </source>
</evidence>
<evidence type="ECO:0000250" key="2">
    <source>
        <dbReference type="UniProtKB" id="Q96PU8"/>
    </source>
</evidence>
<evidence type="ECO:0000250" key="3">
    <source>
        <dbReference type="UniProtKB" id="Q9QYS9"/>
    </source>
</evidence>
<evidence type="ECO:0000269" key="4">
    <source>
    </source>
</evidence>
<evidence type="ECO:0000269" key="5">
    <source>
    </source>
</evidence>
<evidence type="ECO:0000303" key="6">
    <source>
    </source>
</evidence>
<evidence type="ECO:0000303" key="7">
    <source ref="2"/>
</evidence>
<evidence type="ECO:0000305" key="8"/>
<evidence type="ECO:0007829" key="9">
    <source>
        <dbReference type="PDB" id="2BL5"/>
    </source>
</evidence>
<evidence type="ECO:0007829" key="10">
    <source>
        <dbReference type="PDB" id="2YMJ"/>
    </source>
</evidence>
<proteinExistence type="evidence at protein level"/>
<gene>
    <name evidence="8" type="primary">qki.S</name>
</gene>
<keyword id="KW-0002">3D-structure</keyword>
<keyword id="KW-0025">Alternative splicing</keyword>
<keyword id="KW-0963">Cytoplasm</keyword>
<keyword id="KW-0217">Developmental protein</keyword>
<keyword id="KW-0221">Differentiation</keyword>
<keyword id="KW-0507">mRNA processing</keyword>
<keyword id="KW-0508">mRNA splicing</keyword>
<keyword id="KW-0509">mRNA transport</keyword>
<keyword id="KW-0539">Nucleus</keyword>
<keyword id="KW-1185">Reference proteome</keyword>
<keyword id="KW-0694">RNA-binding</keyword>
<keyword id="KW-0810">Translation regulation</keyword>
<keyword id="KW-0813">Transport</keyword>